<reference evidence="12" key="1">
    <citation type="journal article" date="2000" name="Science">
        <title>The genome sequence of Drosophila melanogaster.</title>
        <authorList>
            <person name="Adams M.D."/>
            <person name="Celniker S.E."/>
            <person name="Holt R.A."/>
            <person name="Evans C.A."/>
            <person name="Gocayne J.D."/>
            <person name="Amanatides P.G."/>
            <person name="Scherer S.E."/>
            <person name="Li P.W."/>
            <person name="Hoskins R.A."/>
            <person name="Galle R.F."/>
            <person name="George R.A."/>
            <person name="Lewis S.E."/>
            <person name="Richards S."/>
            <person name="Ashburner M."/>
            <person name="Henderson S.N."/>
            <person name="Sutton G.G."/>
            <person name="Wortman J.R."/>
            <person name="Yandell M.D."/>
            <person name="Zhang Q."/>
            <person name="Chen L.X."/>
            <person name="Brandon R.C."/>
            <person name="Rogers Y.-H.C."/>
            <person name="Blazej R.G."/>
            <person name="Champe M."/>
            <person name="Pfeiffer B.D."/>
            <person name="Wan K.H."/>
            <person name="Doyle C."/>
            <person name="Baxter E.G."/>
            <person name="Helt G."/>
            <person name="Nelson C.R."/>
            <person name="Miklos G.L.G."/>
            <person name="Abril J.F."/>
            <person name="Agbayani A."/>
            <person name="An H.-J."/>
            <person name="Andrews-Pfannkoch C."/>
            <person name="Baldwin D."/>
            <person name="Ballew R.M."/>
            <person name="Basu A."/>
            <person name="Baxendale J."/>
            <person name="Bayraktaroglu L."/>
            <person name="Beasley E.M."/>
            <person name="Beeson K.Y."/>
            <person name="Benos P.V."/>
            <person name="Berman B.P."/>
            <person name="Bhandari D."/>
            <person name="Bolshakov S."/>
            <person name="Borkova D."/>
            <person name="Botchan M.R."/>
            <person name="Bouck J."/>
            <person name="Brokstein P."/>
            <person name="Brottier P."/>
            <person name="Burtis K.C."/>
            <person name="Busam D.A."/>
            <person name="Butler H."/>
            <person name="Cadieu E."/>
            <person name="Center A."/>
            <person name="Chandra I."/>
            <person name="Cherry J.M."/>
            <person name="Cawley S."/>
            <person name="Dahlke C."/>
            <person name="Davenport L.B."/>
            <person name="Davies P."/>
            <person name="de Pablos B."/>
            <person name="Delcher A."/>
            <person name="Deng Z."/>
            <person name="Mays A.D."/>
            <person name="Dew I."/>
            <person name="Dietz S.M."/>
            <person name="Dodson K."/>
            <person name="Doup L.E."/>
            <person name="Downes M."/>
            <person name="Dugan-Rocha S."/>
            <person name="Dunkov B.C."/>
            <person name="Dunn P."/>
            <person name="Durbin K.J."/>
            <person name="Evangelista C.C."/>
            <person name="Ferraz C."/>
            <person name="Ferriera S."/>
            <person name="Fleischmann W."/>
            <person name="Fosler C."/>
            <person name="Gabrielian A.E."/>
            <person name="Garg N.S."/>
            <person name="Gelbart W.M."/>
            <person name="Glasser K."/>
            <person name="Glodek A."/>
            <person name="Gong F."/>
            <person name="Gorrell J.H."/>
            <person name="Gu Z."/>
            <person name="Guan P."/>
            <person name="Harris M."/>
            <person name="Harris N.L."/>
            <person name="Harvey D.A."/>
            <person name="Heiman T.J."/>
            <person name="Hernandez J.R."/>
            <person name="Houck J."/>
            <person name="Hostin D."/>
            <person name="Houston K.A."/>
            <person name="Howland T.J."/>
            <person name="Wei M.-H."/>
            <person name="Ibegwam C."/>
            <person name="Jalali M."/>
            <person name="Kalush F."/>
            <person name="Karpen G.H."/>
            <person name="Ke Z."/>
            <person name="Kennison J.A."/>
            <person name="Ketchum K.A."/>
            <person name="Kimmel B.E."/>
            <person name="Kodira C.D."/>
            <person name="Kraft C.L."/>
            <person name="Kravitz S."/>
            <person name="Kulp D."/>
            <person name="Lai Z."/>
            <person name="Lasko P."/>
            <person name="Lei Y."/>
            <person name="Levitsky A.A."/>
            <person name="Li J.H."/>
            <person name="Li Z."/>
            <person name="Liang Y."/>
            <person name="Lin X."/>
            <person name="Liu X."/>
            <person name="Mattei B."/>
            <person name="McIntosh T.C."/>
            <person name="McLeod M.P."/>
            <person name="McPherson D."/>
            <person name="Merkulov G."/>
            <person name="Milshina N.V."/>
            <person name="Mobarry C."/>
            <person name="Morris J."/>
            <person name="Moshrefi A."/>
            <person name="Mount S.M."/>
            <person name="Moy M."/>
            <person name="Murphy B."/>
            <person name="Murphy L."/>
            <person name="Muzny D.M."/>
            <person name="Nelson D.L."/>
            <person name="Nelson D.R."/>
            <person name="Nelson K.A."/>
            <person name="Nixon K."/>
            <person name="Nusskern D.R."/>
            <person name="Pacleb J.M."/>
            <person name="Palazzolo M."/>
            <person name="Pittman G.S."/>
            <person name="Pan S."/>
            <person name="Pollard J."/>
            <person name="Puri V."/>
            <person name="Reese M.G."/>
            <person name="Reinert K."/>
            <person name="Remington K."/>
            <person name="Saunders R.D.C."/>
            <person name="Scheeler F."/>
            <person name="Shen H."/>
            <person name="Shue B.C."/>
            <person name="Siden-Kiamos I."/>
            <person name="Simpson M."/>
            <person name="Skupski M.P."/>
            <person name="Smith T.J."/>
            <person name="Spier E."/>
            <person name="Spradling A.C."/>
            <person name="Stapleton M."/>
            <person name="Strong R."/>
            <person name="Sun E."/>
            <person name="Svirskas R."/>
            <person name="Tector C."/>
            <person name="Turner R."/>
            <person name="Venter E."/>
            <person name="Wang A.H."/>
            <person name="Wang X."/>
            <person name="Wang Z.-Y."/>
            <person name="Wassarman D.A."/>
            <person name="Weinstock G.M."/>
            <person name="Weissenbach J."/>
            <person name="Williams S.M."/>
            <person name="Woodage T."/>
            <person name="Worley K.C."/>
            <person name="Wu D."/>
            <person name="Yang S."/>
            <person name="Yao Q.A."/>
            <person name="Ye J."/>
            <person name="Yeh R.-F."/>
            <person name="Zaveri J.S."/>
            <person name="Zhan M."/>
            <person name="Zhang G."/>
            <person name="Zhao Q."/>
            <person name="Zheng L."/>
            <person name="Zheng X.H."/>
            <person name="Zhong F.N."/>
            <person name="Zhong W."/>
            <person name="Zhou X."/>
            <person name="Zhu S.C."/>
            <person name="Zhu X."/>
            <person name="Smith H.O."/>
            <person name="Gibbs R.A."/>
            <person name="Myers E.W."/>
            <person name="Rubin G.M."/>
            <person name="Venter J.C."/>
        </authorList>
    </citation>
    <scope>NUCLEOTIDE SEQUENCE [LARGE SCALE GENOMIC DNA]</scope>
    <source>
        <strain>Berkeley</strain>
    </source>
</reference>
<reference evidence="12" key="2">
    <citation type="journal article" date="2002" name="Genome Biol.">
        <title>Annotation of the Drosophila melanogaster euchromatic genome: a systematic review.</title>
        <authorList>
            <person name="Misra S."/>
            <person name="Crosby M.A."/>
            <person name="Mungall C.J."/>
            <person name="Matthews B.B."/>
            <person name="Campbell K.S."/>
            <person name="Hradecky P."/>
            <person name="Huang Y."/>
            <person name="Kaminker J.S."/>
            <person name="Millburn G.H."/>
            <person name="Prochnik S.E."/>
            <person name="Smith C.D."/>
            <person name="Tupy J.L."/>
            <person name="Whitfield E.J."/>
            <person name="Bayraktaroglu L."/>
            <person name="Berman B.P."/>
            <person name="Bettencourt B.R."/>
            <person name="Celniker S.E."/>
            <person name="de Grey A.D.N.J."/>
            <person name="Drysdale R.A."/>
            <person name="Harris N.L."/>
            <person name="Richter J."/>
            <person name="Russo S."/>
            <person name="Schroeder A.J."/>
            <person name="Shu S.Q."/>
            <person name="Stapleton M."/>
            <person name="Yamada C."/>
            <person name="Ashburner M."/>
            <person name="Gelbart W.M."/>
            <person name="Rubin G.M."/>
            <person name="Lewis S.E."/>
        </authorList>
    </citation>
    <scope>GENOME REANNOTATION</scope>
    <source>
        <strain>Berkeley</strain>
    </source>
</reference>
<reference evidence="11" key="3">
    <citation type="journal article" date="2000" name="Science">
        <title>A Drosophila complementary DNA resource.</title>
        <authorList>
            <person name="Rubin G.M."/>
            <person name="Hong L."/>
            <person name="Brokstein P."/>
            <person name="Evans-Holm M."/>
            <person name="Frise E."/>
            <person name="Stapleton M."/>
            <person name="Harvey D.A."/>
        </authorList>
    </citation>
    <scope>NUCLEOTIDE SEQUENCE [LARGE SCALE MRNA]</scope>
    <source>
        <strain evidence="7">Berkeley</strain>
        <tissue evidence="7">Embryo</tissue>
    </source>
</reference>
<reference evidence="13" key="4">
    <citation type="submission" date="2008-09" db="EMBL/GenBank/DDBJ databases">
        <authorList>
            <person name="Carlson J."/>
            <person name="Booth B."/>
            <person name="Frise E."/>
            <person name="Park S."/>
            <person name="Wan K."/>
            <person name="Yu C."/>
            <person name="Celniker S."/>
        </authorList>
    </citation>
    <scope>NUCLEOTIDE SEQUENCE [LARGE SCALE MRNA]</scope>
</reference>
<reference evidence="10" key="5">
    <citation type="journal article" date="2013" name="Cell">
        <title>Proteasome regulation by ADP-ribosylation.</title>
        <authorList>
            <person name="Cho-Park P.F."/>
            <person name="Steller H."/>
        </authorList>
    </citation>
    <scope>FUNCTION</scope>
    <scope>INTERACTION WITH PI31</scope>
</reference>
<evidence type="ECO:0000250" key="1">
    <source>
        <dbReference type="UniProtKB" id="O95271"/>
    </source>
</evidence>
<evidence type="ECO:0000250" key="2">
    <source>
        <dbReference type="UniProtKB" id="Q9H2K2"/>
    </source>
</evidence>
<evidence type="ECO:0000255" key="3"/>
<evidence type="ECO:0000255" key="4">
    <source>
        <dbReference type="PROSITE-ProRule" id="PRU00184"/>
    </source>
</evidence>
<evidence type="ECO:0000255" key="5">
    <source>
        <dbReference type="PROSITE-ProRule" id="PRU00397"/>
    </source>
</evidence>
<evidence type="ECO:0000256" key="6">
    <source>
        <dbReference type="SAM" id="MobiDB-lite"/>
    </source>
</evidence>
<evidence type="ECO:0000269" key="7">
    <source>
    </source>
</evidence>
<evidence type="ECO:0000269" key="8">
    <source>
    </source>
</evidence>
<evidence type="ECO:0000303" key="9">
    <source>
    </source>
</evidence>
<evidence type="ECO:0000305" key="10"/>
<evidence type="ECO:0000312" key="11">
    <source>
        <dbReference type="EMBL" id="AAD34784.1"/>
    </source>
</evidence>
<evidence type="ECO:0000312" key="12">
    <source>
        <dbReference type="EMBL" id="AAF56487.1"/>
    </source>
</evidence>
<evidence type="ECO:0000312" key="13">
    <source>
        <dbReference type="EMBL" id="ACH92236.1"/>
    </source>
</evidence>
<evidence type="ECO:0000312" key="14">
    <source>
        <dbReference type="FlyBase" id="FBgn0027508"/>
    </source>
</evidence>
<dbReference type="EC" id="2.4.2.30" evidence="8"/>
<dbReference type="EC" id="2.4.2.-" evidence="2"/>
<dbReference type="EMBL" id="AE014297">
    <property type="protein sequence ID" value="AAF56487.1"/>
    <property type="molecule type" value="Genomic_DNA"/>
</dbReference>
<dbReference type="EMBL" id="AF132196">
    <property type="protein sequence ID" value="AAD34784.1"/>
    <property type="molecule type" value="mRNA"/>
</dbReference>
<dbReference type="EMBL" id="BT044171">
    <property type="protein sequence ID" value="ACH92236.1"/>
    <property type="molecule type" value="mRNA"/>
</dbReference>
<dbReference type="RefSeq" id="NP_651410.1">
    <property type="nucleotide sequence ID" value="NM_143153.3"/>
</dbReference>
<dbReference type="EMDB" id="EMD-8898"/>
<dbReference type="SMR" id="Q9VBP3"/>
<dbReference type="BioGRID" id="68007">
    <property type="interactions" value="20"/>
</dbReference>
<dbReference type="FunCoup" id="Q9VBP3">
    <property type="interactions" value="2490"/>
</dbReference>
<dbReference type="IntAct" id="Q9VBP3">
    <property type="interactions" value="9"/>
</dbReference>
<dbReference type="STRING" id="7227.FBpp0303409"/>
<dbReference type="GlyGen" id="Q9VBP3">
    <property type="glycosylation" value="1 site"/>
</dbReference>
<dbReference type="PaxDb" id="7227-FBpp0084264"/>
<dbReference type="DNASU" id="43095"/>
<dbReference type="EnsemblMetazoa" id="FBtr0084890">
    <property type="protein sequence ID" value="FBpp0084264"/>
    <property type="gene ID" value="FBgn0027508"/>
</dbReference>
<dbReference type="GeneID" id="43095"/>
<dbReference type="KEGG" id="dme:Dmel_CG4719"/>
<dbReference type="UCSC" id="CG4719-RA">
    <property type="organism name" value="d. melanogaster"/>
</dbReference>
<dbReference type="AGR" id="FB:FBgn0027508"/>
<dbReference type="CTD" id="8658"/>
<dbReference type="FlyBase" id="FBgn0027508">
    <property type="gene designation" value="Tnks"/>
</dbReference>
<dbReference type="VEuPathDB" id="VectorBase:FBgn0027508"/>
<dbReference type="eggNOG" id="KOG4177">
    <property type="taxonomic scope" value="Eukaryota"/>
</dbReference>
<dbReference type="GeneTree" id="ENSGT00940000171680"/>
<dbReference type="HOGENOM" id="CLU_004303_0_0_1"/>
<dbReference type="InParanoid" id="Q9VBP3"/>
<dbReference type="OMA" id="TAETINC"/>
<dbReference type="OrthoDB" id="4772757at2759"/>
<dbReference type="PhylomeDB" id="Q9VBP3"/>
<dbReference type="SignaLink" id="Q9VBP3"/>
<dbReference type="BioGRID-ORCS" id="43095">
    <property type="hits" value="0 hits in 3 CRISPR screens"/>
</dbReference>
<dbReference type="CD-CODE" id="E61E225E">
    <property type="entry name" value="Stress granule"/>
</dbReference>
<dbReference type="ChiTaRS" id="Tnks">
    <property type="organism name" value="fly"/>
</dbReference>
<dbReference type="GenomeRNAi" id="43095"/>
<dbReference type="PRO" id="PR:Q9VBP3"/>
<dbReference type="Proteomes" id="UP000000803">
    <property type="component" value="Chromosome 3R"/>
</dbReference>
<dbReference type="Bgee" id="FBgn0027508">
    <property type="expression patterns" value="Expressed in dorsal appendage forming follicle cell in ovary and 87 other cell types or tissues"/>
</dbReference>
<dbReference type="ExpressionAtlas" id="Q9VBP3">
    <property type="expression patterns" value="baseline and differential"/>
</dbReference>
<dbReference type="GO" id="GO:0005737">
    <property type="term" value="C:cytoplasm"/>
    <property type="evidence" value="ECO:0000318"/>
    <property type="project" value="GO_Central"/>
</dbReference>
<dbReference type="GO" id="GO:0005829">
    <property type="term" value="C:cytosol"/>
    <property type="evidence" value="ECO:0000314"/>
    <property type="project" value="FlyBase"/>
</dbReference>
<dbReference type="GO" id="GO:0005634">
    <property type="term" value="C:nucleus"/>
    <property type="evidence" value="ECO:0000314"/>
    <property type="project" value="FlyBase"/>
</dbReference>
<dbReference type="GO" id="GO:0046872">
    <property type="term" value="F:metal ion binding"/>
    <property type="evidence" value="ECO:0007669"/>
    <property type="project" value="UniProtKB-KW"/>
</dbReference>
<dbReference type="GO" id="GO:0003950">
    <property type="term" value="F:NAD+ poly-ADP-ribosyltransferase activity"/>
    <property type="evidence" value="ECO:0000314"/>
    <property type="project" value="FlyBase"/>
</dbReference>
<dbReference type="GO" id="GO:0140806">
    <property type="term" value="F:NAD+-protein-aspartate ADP-ribosyltransferase activity"/>
    <property type="evidence" value="ECO:0007669"/>
    <property type="project" value="RHEA"/>
</dbReference>
<dbReference type="GO" id="GO:0140807">
    <property type="term" value="F:NAD+-protein-glutamate ADP-ribosyltransferase activity"/>
    <property type="evidence" value="ECO:0007669"/>
    <property type="project" value="RHEA"/>
</dbReference>
<dbReference type="GO" id="GO:0016779">
    <property type="term" value="F:nucleotidyltransferase activity"/>
    <property type="evidence" value="ECO:0007669"/>
    <property type="project" value="UniProtKB-KW"/>
</dbReference>
<dbReference type="GO" id="GO:0090263">
    <property type="term" value="P:positive regulation of canonical Wnt signaling pathway"/>
    <property type="evidence" value="ECO:0000314"/>
    <property type="project" value="FlyBase"/>
</dbReference>
<dbReference type="GO" id="GO:0046330">
    <property type="term" value="P:positive regulation of JNK cascade"/>
    <property type="evidence" value="ECO:0000314"/>
    <property type="project" value="FlyBase"/>
</dbReference>
<dbReference type="GO" id="GO:0032436">
    <property type="term" value="P:positive regulation of proteasomal ubiquitin-dependent protein catabolic process"/>
    <property type="evidence" value="ECO:0000314"/>
    <property type="project" value="FlyBase"/>
</dbReference>
<dbReference type="GO" id="GO:0045732">
    <property type="term" value="P:positive regulation of protein catabolic process"/>
    <property type="evidence" value="ECO:0000315"/>
    <property type="project" value="FlyBase"/>
</dbReference>
<dbReference type="GO" id="GO:1904355">
    <property type="term" value="P:positive regulation of telomere capping"/>
    <property type="evidence" value="ECO:0000318"/>
    <property type="project" value="GO_Central"/>
</dbReference>
<dbReference type="GO" id="GO:2000060">
    <property type="term" value="P:positive regulation of ubiquitin-dependent protein catabolic process"/>
    <property type="evidence" value="ECO:0000315"/>
    <property type="project" value="FlyBase"/>
</dbReference>
<dbReference type="GO" id="GO:0070198">
    <property type="term" value="P:protein localization to chromosome, telomeric region"/>
    <property type="evidence" value="ECO:0000318"/>
    <property type="project" value="GO_Central"/>
</dbReference>
<dbReference type="CDD" id="cd09524">
    <property type="entry name" value="SAM_tankyrase1_2"/>
    <property type="match status" value="1"/>
</dbReference>
<dbReference type="CDD" id="cd01438">
    <property type="entry name" value="tankyrase_like"/>
    <property type="match status" value="1"/>
</dbReference>
<dbReference type="FunFam" id="1.25.40.20:FF:000009">
    <property type="entry name" value="Poly [ADP-ribose] polymerase"/>
    <property type="match status" value="2"/>
</dbReference>
<dbReference type="FunFam" id="1.25.40.20:FF:000010">
    <property type="entry name" value="Poly [ADP-ribose] polymerase"/>
    <property type="match status" value="1"/>
</dbReference>
<dbReference type="FunFam" id="1.25.40.20:FF:000356">
    <property type="entry name" value="Poly [ADP-ribose] polymerase"/>
    <property type="match status" value="1"/>
</dbReference>
<dbReference type="FunFam" id="3.90.228.10:FF:000001">
    <property type="entry name" value="Poly [ADP-ribose] polymerase tankyrase-2"/>
    <property type="match status" value="1"/>
</dbReference>
<dbReference type="Gene3D" id="3.90.228.10">
    <property type="match status" value="1"/>
</dbReference>
<dbReference type="Gene3D" id="6.20.320.10">
    <property type="match status" value="1"/>
</dbReference>
<dbReference type="Gene3D" id="1.25.40.20">
    <property type="entry name" value="Ankyrin repeat-containing domain"/>
    <property type="match status" value="5"/>
</dbReference>
<dbReference type="Gene3D" id="1.10.150.50">
    <property type="entry name" value="Transcription Factor, Ets-1"/>
    <property type="match status" value="1"/>
</dbReference>
<dbReference type="InterPro" id="IPR002110">
    <property type="entry name" value="Ankyrin_rpt"/>
</dbReference>
<dbReference type="InterPro" id="IPR036770">
    <property type="entry name" value="Ankyrin_rpt-contain_sf"/>
</dbReference>
<dbReference type="InterPro" id="IPR012317">
    <property type="entry name" value="Poly(ADP-ribose)pol_cat_dom"/>
</dbReference>
<dbReference type="InterPro" id="IPR001660">
    <property type="entry name" value="SAM"/>
</dbReference>
<dbReference type="InterPro" id="IPR013761">
    <property type="entry name" value="SAM/pointed_sf"/>
</dbReference>
<dbReference type="PANTHER" id="PTHR24171:SF9">
    <property type="entry name" value="ANKYRIN REPEAT DOMAIN-CONTAINING PROTEIN 39"/>
    <property type="match status" value="1"/>
</dbReference>
<dbReference type="PANTHER" id="PTHR24171">
    <property type="entry name" value="ANKYRIN REPEAT DOMAIN-CONTAINING PROTEIN 39-RELATED"/>
    <property type="match status" value="1"/>
</dbReference>
<dbReference type="Pfam" id="PF00023">
    <property type="entry name" value="Ank"/>
    <property type="match status" value="2"/>
</dbReference>
<dbReference type="Pfam" id="PF12796">
    <property type="entry name" value="Ank_2"/>
    <property type="match status" value="6"/>
</dbReference>
<dbReference type="Pfam" id="PF00644">
    <property type="entry name" value="PARP"/>
    <property type="match status" value="1"/>
</dbReference>
<dbReference type="Pfam" id="PF07647">
    <property type="entry name" value="SAM_2"/>
    <property type="match status" value="1"/>
</dbReference>
<dbReference type="PRINTS" id="PR01415">
    <property type="entry name" value="ANKYRIN"/>
</dbReference>
<dbReference type="SMART" id="SM00248">
    <property type="entry name" value="ANK"/>
    <property type="match status" value="17"/>
</dbReference>
<dbReference type="SMART" id="SM00454">
    <property type="entry name" value="SAM"/>
    <property type="match status" value="1"/>
</dbReference>
<dbReference type="SUPFAM" id="SSF56399">
    <property type="entry name" value="ADP-ribosylation"/>
    <property type="match status" value="1"/>
</dbReference>
<dbReference type="SUPFAM" id="SSF48403">
    <property type="entry name" value="Ankyrin repeat"/>
    <property type="match status" value="3"/>
</dbReference>
<dbReference type="SUPFAM" id="SSF47769">
    <property type="entry name" value="SAM/Pointed domain"/>
    <property type="match status" value="1"/>
</dbReference>
<dbReference type="PROSITE" id="PS50297">
    <property type="entry name" value="ANK_REP_REGION"/>
    <property type="match status" value="1"/>
</dbReference>
<dbReference type="PROSITE" id="PS50088">
    <property type="entry name" value="ANK_REPEAT"/>
    <property type="match status" value="14"/>
</dbReference>
<dbReference type="PROSITE" id="PS51059">
    <property type="entry name" value="PARP_CATALYTIC"/>
    <property type="match status" value="1"/>
</dbReference>
<dbReference type="PROSITE" id="PS50105">
    <property type="entry name" value="SAM_DOMAIN"/>
    <property type="match status" value="1"/>
</dbReference>
<proteinExistence type="evidence at protein level"/>
<comment type="function">
    <text evidence="8">Stimulates proteasome activity, probably by ADP-ribosylation of PI31 (PubMed:23622245). Modulates 26S proteasome assembly (PubMed:23622245).</text>
</comment>
<comment type="catalytic activity">
    <reaction evidence="8">
        <text>NAD(+) + (ADP-D-ribosyl)n-acceptor = nicotinamide + (ADP-D-ribosyl)n+1-acceptor + H(+).</text>
        <dbReference type="EC" id="2.4.2.30"/>
    </reaction>
</comment>
<comment type="catalytic activity">
    <reaction evidence="10">
        <text>L-aspartyl-[protein] + NAD(+) = 4-O-(ADP-D-ribosyl)-L-aspartyl-[protein] + nicotinamide</text>
        <dbReference type="Rhea" id="RHEA:54424"/>
        <dbReference type="Rhea" id="RHEA-COMP:9867"/>
        <dbReference type="Rhea" id="RHEA-COMP:13832"/>
        <dbReference type="ChEBI" id="CHEBI:17154"/>
        <dbReference type="ChEBI" id="CHEBI:29961"/>
        <dbReference type="ChEBI" id="CHEBI:57540"/>
        <dbReference type="ChEBI" id="CHEBI:138102"/>
    </reaction>
    <physiologicalReaction direction="left-to-right" evidence="10">
        <dbReference type="Rhea" id="RHEA:54425"/>
    </physiologicalReaction>
</comment>
<comment type="catalytic activity">
    <reaction evidence="10">
        <text>L-glutamyl-[protein] + NAD(+) = 5-O-(ADP-D-ribosyl)-L-glutamyl-[protein] + nicotinamide</text>
        <dbReference type="Rhea" id="RHEA:58224"/>
        <dbReference type="Rhea" id="RHEA-COMP:10208"/>
        <dbReference type="Rhea" id="RHEA-COMP:15089"/>
        <dbReference type="ChEBI" id="CHEBI:17154"/>
        <dbReference type="ChEBI" id="CHEBI:29973"/>
        <dbReference type="ChEBI" id="CHEBI:57540"/>
        <dbReference type="ChEBI" id="CHEBI:142540"/>
    </reaction>
    <physiologicalReaction direction="left-to-right" evidence="10">
        <dbReference type="Rhea" id="RHEA:58225"/>
    </physiologicalReaction>
</comment>
<comment type="subunit">
    <text evidence="8">Interacts (via ANK repeats) with PI31.</text>
</comment>
<comment type="interaction">
    <interactant intactId="EBI-124451">
        <id>Q9VBP3</id>
    </interactant>
    <interactant intactId="EBI-144377">
        <id>Q9V637</id>
        <label>PI31</label>
    </interactant>
    <organismsDiffer>false</organismsDiffer>
    <experiments>3</experiments>
</comment>
<comment type="similarity">
    <text evidence="10">Belongs to the ARTD/PARP family.</text>
</comment>
<sequence length="1181" mass="127945">MANSSRSRAILSVNLDAVMANDPLRELFEACKTGEIAKVKKLITPQTVNARDTAGRKSTPLHFAAGYGRREVVEFLLNSGASIQACDEGGLHPLHNCCSFGHAEVVRLLLKAGASPNTTDNWNYTPLHEAASKGKVDVCLALLQHGANHTIRNSEQKTPLELADEATRPVLTGEYRKDELLEAARSGAEDRLLALLTPLNVNCHASDGRRSTPLHLAAGYNRIGIVEILLANGADVHAKDKGGLVPLHNACSYGHFDVTKLLIQAGANVNANDLWAFTPLHEAASKSRVEVCSLLLSRGADPTLLNCHSKSAIDAAPTRELRERIAFEYKGHCLLDACRKCDVSRAKKLVCAEIVNFVHPYTGDTPLHLAVVSPDGKRKQLMELLTRKGSLLNEKNKAFLTPLHLAAELLHYDAMEVLLKQGAKVNALDSLGQTPLHRCARDEQAVRLLLSYAADTNIVSLEGLTAAQLASDSVLKLLKNPPDSETHLLEAAKAGDLDTVRRIVLNNPISVNCRDLDGRHSTPLHFAAGFNRVPVVQFLLEHGAEVYAADKGGLVPLHNACSYGHYEVTELLVKHGANVNVSDLWKFTPLHEAAAKGKYDICKLLLKHGADPMKKNRDGATPADLVKESDHDVAELLRGPSALLDAAKKGNLARVQRLVTPESINCRDAQGRNSTPLHLAAGYNNFECAEYLLENGADVNAQDKGGLIPLHNASSYGHLDIAALLIKHKTVVNATDKWGFTPLHEAAQKGRTQLCSLLLAHGADAYMKNQEGQTPIELATADDVKCLLQDAMATSLSQQALSASTQSLTSSSPAPDATAAAAPGTSSSSSSAILSPTTETVLLPTGASMILSVPVPLPLSSSTRISPAQGAEANGAEGSSSDDLLPDADTITNVSGFLSSQQLHHLIELFEREQITLDILAEMGHDDLKQVGVSAYGFRHKILKGIAQLRSTTGIGNNVNLCTLLVDLLPDDKEFVAVEEEMQATIREHRDNGQAGGYFTRYNIIRVQKVQNRKLWERYAHRRQEIAEENFLQSNERMLFHGSPFINAIVQRGFDERHAYIGGMFGAGIYFAEHSSKSNQYVYGIGGGIGCPSHKDKSCYVCPRQLLLCRVALGKSFLQYSAMKMAHAPPGHHSVVGRPSAGGLHFAEYVVYRGEQSYPEYLITYQIVKPDDSSSGTEDTR</sequence>
<feature type="chain" id="PRO_0000424892" description="Poly [ADP-ribose] polymerase tankyrase">
    <location>
        <begin position="1"/>
        <end position="1181"/>
    </location>
</feature>
<feature type="repeat" description="ANK 1" evidence="3">
    <location>
        <begin position="56"/>
        <end position="85"/>
    </location>
</feature>
<feature type="repeat" description="ANK 2" evidence="3">
    <location>
        <begin position="89"/>
        <end position="118"/>
    </location>
</feature>
<feature type="repeat" description="ANK 3" evidence="3">
    <location>
        <begin position="122"/>
        <end position="151"/>
    </location>
</feature>
<feature type="repeat" description="ANK 4" evidence="3">
    <location>
        <begin position="209"/>
        <end position="238"/>
    </location>
</feature>
<feature type="repeat" description="ANK 5" evidence="3">
    <location>
        <begin position="242"/>
        <end position="271"/>
    </location>
</feature>
<feature type="repeat" description="ANK 6" evidence="3">
    <location>
        <begin position="275"/>
        <end position="304"/>
    </location>
</feature>
<feature type="repeat" description="ANK 7" evidence="3">
    <location>
        <begin position="362"/>
        <end position="394"/>
    </location>
</feature>
<feature type="repeat" description="ANK 8" evidence="3">
    <location>
        <begin position="398"/>
        <end position="427"/>
    </location>
</feature>
<feature type="repeat" description="ANK 9" evidence="3">
    <location>
        <begin position="431"/>
        <end position="458"/>
    </location>
</feature>
<feature type="repeat" description="ANK 10" evidence="3">
    <location>
        <begin position="483"/>
        <end position="513"/>
    </location>
</feature>
<feature type="repeat" description="ANK 11" evidence="3">
    <location>
        <begin position="519"/>
        <end position="548"/>
    </location>
</feature>
<feature type="repeat" description="ANK 12" evidence="3">
    <location>
        <begin position="552"/>
        <end position="581"/>
    </location>
</feature>
<feature type="repeat" description="ANK 13" evidence="3">
    <location>
        <begin position="585"/>
        <end position="614"/>
    </location>
</feature>
<feature type="repeat" description="ANK 14" evidence="3">
    <location>
        <begin position="638"/>
        <end position="668"/>
    </location>
</feature>
<feature type="repeat" description="ANK 15" evidence="3">
    <location>
        <begin position="672"/>
        <end position="701"/>
    </location>
</feature>
<feature type="repeat" description="ANK 16" evidence="3">
    <location>
        <begin position="705"/>
        <end position="734"/>
    </location>
</feature>
<feature type="repeat" description="ANK 17" evidence="3">
    <location>
        <begin position="738"/>
        <end position="767"/>
    </location>
</feature>
<feature type="repeat" description="ANK 18" evidence="3">
    <location>
        <begin position="771"/>
        <end position="799"/>
    </location>
</feature>
<feature type="domain" description="SAM" evidence="4">
    <location>
        <begin position="889"/>
        <end position="952"/>
    </location>
</feature>
<feature type="domain" description="PARP catalytic" evidence="5">
    <location>
        <begin position="969"/>
        <end position="1174"/>
    </location>
</feature>
<feature type="region of interest" description="Disordered" evidence="6">
    <location>
        <begin position="807"/>
        <end position="834"/>
    </location>
</feature>
<feature type="region of interest" description="Disordered" evidence="6">
    <location>
        <begin position="864"/>
        <end position="886"/>
    </location>
</feature>
<feature type="binding site" evidence="1">
    <location>
        <position position="1091"/>
    </location>
    <ligand>
        <name>Zn(2+)</name>
        <dbReference type="ChEBI" id="CHEBI:29105"/>
    </ligand>
</feature>
<feature type="binding site" evidence="1">
    <location>
        <position position="1094"/>
    </location>
    <ligand>
        <name>Zn(2+)</name>
        <dbReference type="ChEBI" id="CHEBI:29105"/>
    </ligand>
</feature>
<feature type="binding site" evidence="1">
    <location>
        <position position="1099"/>
    </location>
    <ligand>
        <name>Zn(2+)</name>
        <dbReference type="ChEBI" id="CHEBI:29105"/>
    </ligand>
</feature>
<feature type="binding site" evidence="1">
    <location>
        <position position="1102"/>
    </location>
    <ligand>
        <name>Zn(2+)</name>
        <dbReference type="ChEBI" id="CHEBI:29105"/>
    </ligand>
</feature>
<feature type="sequence conflict" description="In Ref. 3; AAD34784." evidence="10" ref="3">
    <original>F</original>
    <variation>S</variation>
    <location>
        <position position="28"/>
    </location>
</feature>
<accession>Q9VBP3</accession>
<accession>Q9XZ37</accession>
<keyword id="KW-0040">ANK repeat</keyword>
<keyword id="KW-0328">Glycosyltransferase</keyword>
<keyword id="KW-0479">Metal-binding</keyword>
<keyword id="KW-0520">NAD</keyword>
<keyword id="KW-0548">Nucleotidyltransferase</keyword>
<keyword id="KW-1185">Reference proteome</keyword>
<keyword id="KW-0677">Repeat</keyword>
<keyword id="KW-0808">Transferase</keyword>
<keyword id="KW-0862">Zinc</keyword>
<gene>
    <name evidence="14" type="primary">Tnks</name>
    <name evidence="12 14" type="synonym">tankyrase</name>
    <name type="ORF">CG4719</name>
</gene>
<protein>
    <recommendedName>
        <fullName>Poly [ADP-ribose] polymerase tankyrase</fullName>
        <shortName evidence="9">dTNKS</shortName>
        <ecNumber evidence="8">2.4.2.30</ecNumber>
    </recommendedName>
    <alternativeName>
        <fullName>Poly [ADP-ribose] polymerase</fullName>
    </alternativeName>
    <alternativeName>
        <fullName evidence="10">Protein poly-ADP-ribosyltransferase tankyrase</fullName>
        <ecNumber evidence="2">2.4.2.-</ecNumber>
    </alternativeName>
</protein>
<name>TNKS_DROME</name>
<organism>
    <name type="scientific">Drosophila melanogaster</name>
    <name type="common">Fruit fly</name>
    <dbReference type="NCBI Taxonomy" id="7227"/>
    <lineage>
        <taxon>Eukaryota</taxon>
        <taxon>Metazoa</taxon>
        <taxon>Ecdysozoa</taxon>
        <taxon>Arthropoda</taxon>
        <taxon>Hexapoda</taxon>
        <taxon>Insecta</taxon>
        <taxon>Pterygota</taxon>
        <taxon>Neoptera</taxon>
        <taxon>Endopterygota</taxon>
        <taxon>Diptera</taxon>
        <taxon>Brachycera</taxon>
        <taxon>Muscomorpha</taxon>
        <taxon>Ephydroidea</taxon>
        <taxon>Drosophilidae</taxon>
        <taxon>Drosophila</taxon>
        <taxon>Sophophora</taxon>
    </lineage>
</organism>